<evidence type="ECO:0000250" key="1"/>
<evidence type="ECO:0000250" key="2">
    <source>
        <dbReference type="UniProtKB" id="P05413"/>
    </source>
</evidence>
<evidence type="ECO:0000250" key="3">
    <source>
        <dbReference type="UniProtKB" id="P07483"/>
    </source>
</evidence>
<evidence type="ECO:0000250" key="4">
    <source>
        <dbReference type="UniProtKB" id="P10790"/>
    </source>
</evidence>
<evidence type="ECO:0000305" key="5"/>
<keyword id="KW-0007">Acetylation</keyword>
<keyword id="KW-0963">Cytoplasm</keyword>
<keyword id="KW-0446">Lipid-binding</keyword>
<keyword id="KW-0597">Phosphoprotein</keyword>
<keyword id="KW-1185">Reference proteome</keyword>
<keyword id="KW-0813">Transport</keyword>
<proteinExistence type="inferred from homology"/>
<sequence length="133" mass="14779">MVDAFVGTWKLVDSKNFDDYMKSLGVGFATRQVGNMTKPTTIIEVNGDTVIIKTQSTFKNTEISFKLGVEFDETTADDRKVKSIVTLDGGKLVHVQKWNGQETSLVREMVDGKLILTLTHGTAVCTRTYEKQA</sequence>
<feature type="initiator methionine" description="Removed" evidence="4">
    <location>
        <position position="1"/>
    </location>
</feature>
<feature type="chain" id="PRO_0000253470" description="Fatty acid-binding protein, heart">
    <location>
        <begin position="2"/>
        <end position="133"/>
    </location>
</feature>
<feature type="binding site" evidence="2">
    <location>
        <begin position="127"/>
        <end position="129"/>
    </location>
    <ligand>
        <name>(9Z)-octadecenoate</name>
        <dbReference type="ChEBI" id="CHEBI:30823"/>
    </ligand>
</feature>
<feature type="binding site" evidence="2">
    <location>
        <begin position="127"/>
        <end position="129"/>
    </location>
    <ligand>
        <name>hexadecanoate</name>
        <dbReference type="ChEBI" id="CHEBI:7896"/>
    </ligand>
</feature>
<feature type="binding site" evidence="2">
    <location>
        <begin position="127"/>
        <end position="129"/>
    </location>
    <ligand>
        <name>octadecanoate</name>
        <dbReference type="ChEBI" id="CHEBI:25629"/>
    </ligand>
</feature>
<feature type="modified residue" description="N-acetylvaline" evidence="4">
    <location>
        <position position="2"/>
    </location>
</feature>
<feature type="modified residue" description="Phosphothreonine" evidence="3">
    <location>
        <position position="8"/>
    </location>
</feature>
<feature type="modified residue" description="Phosphotyrosine; by Tyr-kinases" evidence="3">
    <location>
        <position position="20"/>
    </location>
</feature>
<feature type="modified residue" description="Phosphoserine" evidence="3">
    <location>
        <position position="23"/>
    </location>
</feature>
<feature type="modified residue" description="Phosphothreonine" evidence="3">
    <location>
        <position position="30"/>
    </location>
</feature>
<feature type="modified residue" description="Phosphoserine" evidence="3">
    <location>
        <position position="83"/>
    </location>
</feature>
<organism>
    <name type="scientific">Bos mutus grunniens</name>
    <name type="common">Wild yak</name>
    <name type="synonym">Bos grunniens</name>
    <dbReference type="NCBI Taxonomy" id="30521"/>
    <lineage>
        <taxon>Eukaryota</taxon>
        <taxon>Metazoa</taxon>
        <taxon>Chordata</taxon>
        <taxon>Craniata</taxon>
        <taxon>Vertebrata</taxon>
        <taxon>Euteleostomi</taxon>
        <taxon>Mammalia</taxon>
        <taxon>Eutheria</taxon>
        <taxon>Laurasiatheria</taxon>
        <taxon>Artiodactyla</taxon>
        <taxon>Ruminantia</taxon>
        <taxon>Pecora</taxon>
        <taxon>Bovidae</taxon>
        <taxon>Bovinae</taxon>
        <taxon>Bos</taxon>
    </lineage>
</organism>
<protein>
    <recommendedName>
        <fullName>Fatty acid-binding protein, heart</fullName>
    </recommendedName>
    <alternativeName>
        <fullName>Fatty acid-binding protein 3</fullName>
    </alternativeName>
    <alternativeName>
        <fullName>Heart-type fatty acid-binding protein</fullName>
        <shortName>H-FABP</shortName>
    </alternativeName>
</protein>
<accession>Q4TZH2</accession>
<name>FABPH_BOSMU</name>
<dbReference type="EMBL" id="DQ026674">
    <property type="protein sequence ID" value="AAY44416.1"/>
    <property type="molecule type" value="Genomic_DNA"/>
</dbReference>
<dbReference type="SMR" id="Q4TZH2"/>
<dbReference type="Ensembl" id="ENSBGRT00000014436.1">
    <property type="protein sequence ID" value="ENSBGRP00000012517.1"/>
    <property type="gene ID" value="ENSBGRG00000007849.1"/>
</dbReference>
<dbReference type="GeneTree" id="ENSGT00940000155104"/>
<dbReference type="Proteomes" id="UP000694520">
    <property type="component" value="Chromosome 2"/>
</dbReference>
<dbReference type="GO" id="GO:0005737">
    <property type="term" value="C:cytoplasm"/>
    <property type="evidence" value="ECO:0007669"/>
    <property type="project" value="UniProtKB-SubCell"/>
</dbReference>
<dbReference type="GO" id="GO:0008289">
    <property type="term" value="F:lipid binding"/>
    <property type="evidence" value="ECO:0007669"/>
    <property type="project" value="UniProtKB-KW"/>
</dbReference>
<dbReference type="CDD" id="cd19466">
    <property type="entry name" value="FABP3"/>
    <property type="match status" value="1"/>
</dbReference>
<dbReference type="FunFam" id="2.40.128.20:FF:000001">
    <property type="entry name" value="Fatty acid-binding protein, adipocyte"/>
    <property type="match status" value="1"/>
</dbReference>
<dbReference type="Gene3D" id="2.40.128.20">
    <property type="match status" value="1"/>
</dbReference>
<dbReference type="InterPro" id="IPR012674">
    <property type="entry name" value="Calycin"/>
</dbReference>
<dbReference type="InterPro" id="IPR000463">
    <property type="entry name" value="Fatty_acid-bd"/>
</dbReference>
<dbReference type="InterPro" id="IPR031259">
    <property type="entry name" value="ILBP"/>
</dbReference>
<dbReference type="InterPro" id="IPR000566">
    <property type="entry name" value="Lipocln_cytosolic_FA-bd_dom"/>
</dbReference>
<dbReference type="PANTHER" id="PTHR11955">
    <property type="entry name" value="FATTY ACID BINDING PROTEIN"/>
    <property type="match status" value="1"/>
</dbReference>
<dbReference type="Pfam" id="PF00061">
    <property type="entry name" value="Lipocalin"/>
    <property type="match status" value="1"/>
</dbReference>
<dbReference type="PRINTS" id="PR00178">
    <property type="entry name" value="FATTYACIDBP"/>
</dbReference>
<dbReference type="SUPFAM" id="SSF50814">
    <property type="entry name" value="Lipocalins"/>
    <property type="match status" value="1"/>
</dbReference>
<dbReference type="PROSITE" id="PS00214">
    <property type="entry name" value="FABP"/>
    <property type="match status" value="1"/>
</dbReference>
<comment type="function">
    <text evidence="1">FABPs are thought to play a role in the intracellular transport of long-chain fatty acids and their acyl-CoA esters.</text>
</comment>
<comment type="subcellular location">
    <subcellularLocation>
        <location evidence="1">Cytoplasm</location>
    </subcellularLocation>
</comment>
<comment type="domain">
    <text evidence="1">Forms a beta-barrel structure that accommodates the hydrophobic ligand in its interior.</text>
</comment>
<comment type="similarity">
    <text evidence="5">Belongs to the calycin superfamily. Fatty-acid binding protein (FABP) family.</text>
</comment>
<gene>
    <name type="primary">FABP3</name>
</gene>
<reference key="1">
    <citation type="submission" date="2005-05" db="EMBL/GenBank/DDBJ databases">
        <title>Cloning and characterization of the yak heart fatty acid-binding protein (H-FABP) gene.</title>
        <authorList>
            <person name="Ma Z.-J."/>
            <person name="Zhong J.-C."/>
            <person name="Zi X.-D."/>
            <person name="Chang H.-P."/>
            <person name="Zhang Q."/>
            <person name="Zhang X.-Q."/>
        </authorList>
    </citation>
    <scope>NUCLEOTIDE SEQUENCE [GENOMIC DNA]</scope>
    <source>
        <tissue>Blood</tissue>
    </source>
</reference>